<protein>
    <recommendedName>
        <fullName evidence="1">Small ribosomal subunit protein uS14</fullName>
    </recommendedName>
    <alternativeName>
        <fullName evidence="2">30S ribosomal protein S14 type Z</fullName>
    </alternativeName>
</protein>
<sequence>MAKTSLKIKQARHAKFKVRAYTRCKRCGRPHAVYRKFGICRLCFRHLAYNGSLPGVKKSSW</sequence>
<comment type="function">
    <text evidence="1">Binds 16S rRNA, required for the assembly of 30S particles and may also be responsible for determining the conformation of the 16S rRNA at the A site.</text>
</comment>
<comment type="cofactor">
    <cofactor evidence="1">
        <name>Zn(2+)</name>
        <dbReference type="ChEBI" id="CHEBI:29105"/>
    </cofactor>
    <text evidence="1">Binds 1 zinc ion per subunit.</text>
</comment>
<comment type="subunit">
    <text evidence="1">Part of the 30S ribosomal subunit. Contacts proteins S3 and S10.</text>
</comment>
<comment type="similarity">
    <text evidence="1">Belongs to the universal ribosomal protein uS14 family. Zinc-binding uS14 subfamily.</text>
</comment>
<reference key="1">
    <citation type="journal article" date="2000" name="Mol. Biol. (Mosk.)">
        <title>Determination and analysis of the nucleotide sequence of a segment of a Mycoplasma gallisepticum strain A5969 chromosome, containing operons S10 and rrn23-5.</title>
        <authorList>
            <person name="Skamrov A.V."/>
            <person name="Gol'dman M.A."/>
            <person name="Feoktistova E.S."/>
            <person name="Bibilashvili R.S."/>
        </authorList>
    </citation>
    <scope>NUCLEOTIDE SEQUENCE [GENOMIC DNA]</scope>
    <source>
        <strain>A5969Var.B</strain>
    </source>
</reference>
<reference key="2">
    <citation type="journal article" date="2003" name="Microbiology">
        <title>The complete genome sequence of the avian pathogen Mycoplasma gallisepticum strain R(low).</title>
        <authorList>
            <person name="Papazisi L."/>
            <person name="Gorton T.S."/>
            <person name="Kutish G."/>
            <person name="Markham P.F."/>
            <person name="Browning G.F."/>
            <person name="Nguyen D.K."/>
            <person name="Swartzell S."/>
            <person name="Madan A."/>
            <person name="Mahairas G."/>
            <person name="Geary S.J."/>
        </authorList>
    </citation>
    <scope>NUCLEOTIDE SEQUENCE [LARGE SCALE GENOMIC DNA]</scope>
    <source>
        <strain>R(low / passage 15 / clone 2)</strain>
    </source>
</reference>
<feature type="chain" id="PRO_0000130905" description="Small ribosomal subunit protein uS14">
    <location>
        <begin position="1"/>
        <end position="61"/>
    </location>
</feature>
<feature type="binding site" evidence="1">
    <location>
        <position position="24"/>
    </location>
    <ligand>
        <name>Zn(2+)</name>
        <dbReference type="ChEBI" id="CHEBI:29105"/>
    </ligand>
</feature>
<feature type="binding site" evidence="1">
    <location>
        <position position="27"/>
    </location>
    <ligand>
        <name>Zn(2+)</name>
        <dbReference type="ChEBI" id="CHEBI:29105"/>
    </ligand>
</feature>
<feature type="binding site" evidence="1">
    <location>
        <position position="40"/>
    </location>
    <ligand>
        <name>Zn(2+)</name>
        <dbReference type="ChEBI" id="CHEBI:29105"/>
    </ligand>
</feature>
<feature type="binding site" evidence="1">
    <location>
        <position position="43"/>
    </location>
    <ligand>
        <name>Zn(2+)</name>
        <dbReference type="ChEBI" id="CHEBI:29105"/>
    </ligand>
</feature>
<dbReference type="EMBL" id="AF036708">
    <property type="protein sequence ID" value="AAB95400.1"/>
    <property type="molecule type" value="Genomic_DNA"/>
</dbReference>
<dbReference type="EMBL" id="AE015450">
    <property type="protein sequence ID" value="AAP56414.2"/>
    <property type="molecule type" value="Genomic_DNA"/>
</dbReference>
<dbReference type="RefSeq" id="WP_011113293.1">
    <property type="nucleotide sequence ID" value="NC_004829.2"/>
</dbReference>
<dbReference type="SMR" id="O52345"/>
<dbReference type="KEGG" id="mga:MGA_0732"/>
<dbReference type="PATRIC" id="fig|233150.7.peg.68"/>
<dbReference type="HOGENOM" id="CLU_139869_3_0_14"/>
<dbReference type="OrthoDB" id="9810484at2"/>
<dbReference type="Proteomes" id="UP000001418">
    <property type="component" value="Chromosome"/>
</dbReference>
<dbReference type="GO" id="GO:0005737">
    <property type="term" value="C:cytoplasm"/>
    <property type="evidence" value="ECO:0007669"/>
    <property type="project" value="UniProtKB-ARBA"/>
</dbReference>
<dbReference type="GO" id="GO:0015935">
    <property type="term" value="C:small ribosomal subunit"/>
    <property type="evidence" value="ECO:0007669"/>
    <property type="project" value="TreeGrafter"/>
</dbReference>
<dbReference type="GO" id="GO:0019843">
    <property type="term" value="F:rRNA binding"/>
    <property type="evidence" value="ECO:0007669"/>
    <property type="project" value="UniProtKB-UniRule"/>
</dbReference>
<dbReference type="GO" id="GO:0003735">
    <property type="term" value="F:structural constituent of ribosome"/>
    <property type="evidence" value="ECO:0007669"/>
    <property type="project" value="InterPro"/>
</dbReference>
<dbReference type="GO" id="GO:0008270">
    <property type="term" value="F:zinc ion binding"/>
    <property type="evidence" value="ECO:0007669"/>
    <property type="project" value="UniProtKB-UniRule"/>
</dbReference>
<dbReference type="GO" id="GO:0006412">
    <property type="term" value="P:translation"/>
    <property type="evidence" value="ECO:0007669"/>
    <property type="project" value="UniProtKB-UniRule"/>
</dbReference>
<dbReference type="FunFam" id="4.10.830.10:FF:000001">
    <property type="entry name" value="30S ribosomal protein S14 type Z"/>
    <property type="match status" value="1"/>
</dbReference>
<dbReference type="Gene3D" id="4.10.830.10">
    <property type="entry name" value="30s Ribosomal Protein S14, Chain N"/>
    <property type="match status" value="1"/>
</dbReference>
<dbReference type="HAMAP" id="MF_01364_B">
    <property type="entry name" value="Ribosomal_uS14_2_B"/>
    <property type="match status" value="1"/>
</dbReference>
<dbReference type="InterPro" id="IPR001209">
    <property type="entry name" value="Ribosomal_uS14"/>
</dbReference>
<dbReference type="InterPro" id="IPR023053">
    <property type="entry name" value="Ribosomal_uS14_bact"/>
</dbReference>
<dbReference type="InterPro" id="IPR018271">
    <property type="entry name" value="Ribosomal_uS14_CS"/>
</dbReference>
<dbReference type="InterPro" id="IPR043140">
    <property type="entry name" value="Ribosomal_uS14_sf"/>
</dbReference>
<dbReference type="NCBIfam" id="NF005974">
    <property type="entry name" value="PRK08061.1"/>
    <property type="match status" value="1"/>
</dbReference>
<dbReference type="PANTHER" id="PTHR19836">
    <property type="entry name" value="30S RIBOSOMAL PROTEIN S14"/>
    <property type="match status" value="1"/>
</dbReference>
<dbReference type="PANTHER" id="PTHR19836:SF19">
    <property type="entry name" value="SMALL RIBOSOMAL SUBUNIT PROTEIN US14M"/>
    <property type="match status" value="1"/>
</dbReference>
<dbReference type="Pfam" id="PF00253">
    <property type="entry name" value="Ribosomal_S14"/>
    <property type="match status" value="1"/>
</dbReference>
<dbReference type="SUPFAM" id="SSF57716">
    <property type="entry name" value="Glucocorticoid receptor-like (DNA-binding domain)"/>
    <property type="match status" value="1"/>
</dbReference>
<dbReference type="PROSITE" id="PS00527">
    <property type="entry name" value="RIBOSOMAL_S14"/>
    <property type="match status" value="1"/>
</dbReference>
<accession>O52345</accession>
<evidence type="ECO:0000255" key="1">
    <source>
        <dbReference type="HAMAP-Rule" id="MF_01364"/>
    </source>
</evidence>
<evidence type="ECO:0000305" key="2"/>
<name>RS14Z_MYCGA</name>
<proteinExistence type="inferred from homology"/>
<organism>
    <name type="scientific">Mycoplasmoides gallisepticum (strain R(low / passage 15 / clone 2))</name>
    <name type="common">Mycoplasma gallisepticum</name>
    <dbReference type="NCBI Taxonomy" id="710127"/>
    <lineage>
        <taxon>Bacteria</taxon>
        <taxon>Bacillati</taxon>
        <taxon>Mycoplasmatota</taxon>
        <taxon>Mycoplasmoidales</taxon>
        <taxon>Mycoplasmoidaceae</taxon>
        <taxon>Mycoplasmoides</taxon>
    </lineage>
</organism>
<gene>
    <name evidence="1" type="primary">rpsZ</name>
    <name evidence="1" type="synonym">rps14</name>
    <name evidence="1" type="synonym">rpsN</name>
    <name type="ordered locus">MYCGA0640</name>
    <name type="ORF">MGA_0732</name>
</gene>
<keyword id="KW-0479">Metal-binding</keyword>
<keyword id="KW-1185">Reference proteome</keyword>
<keyword id="KW-0687">Ribonucleoprotein</keyword>
<keyword id="KW-0689">Ribosomal protein</keyword>
<keyword id="KW-0694">RNA-binding</keyword>
<keyword id="KW-0699">rRNA-binding</keyword>
<keyword id="KW-0862">Zinc</keyword>